<feature type="chain" id="PRO_0000323081" description="Small ribosomal subunit protein uS5">
    <location>
        <begin position="1"/>
        <end position="190"/>
    </location>
</feature>
<feature type="domain" description="S5 DRBM" evidence="1">
    <location>
        <begin position="22"/>
        <end position="85"/>
    </location>
</feature>
<evidence type="ECO:0000255" key="1">
    <source>
        <dbReference type="HAMAP-Rule" id="MF_01307"/>
    </source>
</evidence>
<evidence type="ECO:0000305" key="2"/>
<keyword id="KW-1185">Reference proteome</keyword>
<keyword id="KW-0687">Ribonucleoprotein</keyword>
<keyword id="KW-0689">Ribosomal protein</keyword>
<keyword id="KW-0694">RNA-binding</keyword>
<keyword id="KW-0699">rRNA-binding</keyword>
<reference key="1">
    <citation type="journal article" date="2007" name="Science">
        <title>Legumes symbioses: absence of nod genes in photosynthetic bradyrhizobia.</title>
        <authorList>
            <person name="Giraud E."/>
            <person name="Moulin L."/>
            <person name="Vallenet D."/>
            <person name="Barbe V."/>
            <person name="Cytryn E."/>
            <person name="Avarre J.-C."/>
            <person name="Jaubert M."/>
            <person name="Simon D."/>
            <person name="Cartieaux F."/>
            <person name="Prin Y."/>
            <person name="Bena G."/>
            <person name="Hannibal L."/>
            <person name="Fardoux J."/>
            <person name="Kojadinovic M."/>
            <person name="Vuillet L."/>
            <person name="Lajus A."/>
            <person name="Cruveiller S."/>
            <person name="Rouy Z."/>
            <person name="Mangenot S."/>
            <person name="Segurens B."/>
            <person name="Dossat C."/>
            <person name="Franck W.L."/>
            <person name="Chang W.-S."/>
            <person name="Saunders E."/>
            <person name="Bruce D."/>
            <person name="Richardson P."/>
            <person name="Normand P."/>
            <person name="Dreyfus B."/>
            <person name="Pignol D."/>
            <person name="Stacey G."/>
            <person name="Emerich D."/>
            <person name="Vermeglio A."/>
            <person name="Medigue C."/>
            <person name="Sadowsky M."/>
        </authorList>
    </citation>
    <scope>NUCLEOTIDE SEQUENCE [LARGE SCALE GENOMIC DNA]</scope>
    <source>
        <strain>ORS 278</strain>
    </source>
</reference>
<comment type="function">
    <text evidence="1">With S4 and S12 plays an important role in translational accuracy.</text>
</comment>
<comment type="function">
    <text evidence="1">Located at the back of the 30S subunit body where it stabilizes the conformation of the head with respect to the body.</text>
</comment>
<comment type="subunit">
    <text evidence="1">Part of the 30S ribosomal subunit. Contacts proteins S4 and S8.</text>
</comment>
<comment type="domain">
    <text>The N-terminal domain interacts with the head of the 30S subunit; the C-terminal domain interacts with the body and contacts protein S4. The interaction surface between S4 and S5 is involved in control of translational fidelity.</text>
</comment>
<comment type="similarity">
    <text evidence="1">Belongs to the universal ribosomal protein uS5 family.</text>
</comment>
<comment type="sequence caution" evidence="2">
    <conflict type="erroneous initiation">
        <sequence resource="EMBL-CDS" id="CAL76885"/>
    </conflict>
</comment>
<proteinExistence type="inferred from homology"/>
<accession>A4YSK9</accession>
<sequence>MAGERERGGRDRKEREERDSEFVDKLVHINRVAKVVKGGKRFGFAALVVIGDQKGRVGFGHGKAREVPEAIRKATDSAKRNLTRVALREGRTLHHDIFGRHGAGRVYLRAAPAGTGIIAGGPMRAVFETLGIQDVVAKSIGSSNPYNMVRATFNALKHQDSPRSVAARRNIKVSTLQARRVGGDAEAAAD</sequence>
<dbReference type="EMBL" id="CU234118">
    <property type="protein sequence ID" value="CAL76885.1"/>
    <property type="status" value="ALT_INIT"/>
    <property type="molecule type" value="Genomic_DNA"/>
</dbReference>
<dbReference type="RefSeq" id="WP_006611855.1">
    <property type="nucleotide sequence ID" value="NC_009445.1"/>
</dbReference>
<dbReference type="SMR" id="A4YSK9"/>
<dbReference type="STRING" id="114615.BRADO3083"/>
<dbReference type="KEGG" id="bra:BRADO3083"/>
<dbReference type="eggNOG" id="COG0098">
    <property type="taxonomic scope" value="Bacteria"/>
</dbReference>
<dbReference type="HOGENOM" id="CLU_065898_2_2_5"/>
<dbReference type="OrthoDB" id="9809045at2"/>
<dbReference type="Proteomes" id="UP000001994">
    <property type="component" value="Chromosome"/>
</dbReference>
<dbReference type="GO" id="GO:0015935">
    <property type="term" value="C:small ribosomal subunit"/>
    <property type="evidence" value="ECO:0007669"/>
    <property type="project" value="InterPro"/>
</dbReference>
<dbReference type="GO" id="GO:0019843">
    <property type="term" value="F:rRNA binding"/>
    <property type="evidence" value="ECO:0007669"/>
    <property type="project" value="UniProtKB-UniRule"/>
</dbReference>
<dbReference type="GO" id="GO:0003735">
    <property type="term" value="F:structural constituent of ribosome"/>
    <property type="evidence" value="ECO:0007669"/>
    <property type="project" value="InterPro"/>
</dbReference>
<dbReference type="GO" id="GO:0006412">
    <property type="term" value="P:translation"/>
    <property type="evidence" value="ECO:0007669"/>
    <property type="project" value="UniProtKB-UniRule"/>
</dbReference>
<dbReference type="FunFam" id="3.30.160.20:FF:000001">
    <property type="entry name" value="30S ribosomal protein S5"/>
    <property type="match status" value="1"/>
</dbReference>
<dbReference type="FunFam" id="3.30.230.10:FF:000002">
    <property type="entry name" value="30S ribosomal protein S5"/>
    <property type="match status" value="1"/>
</dbReference>
<dbReference type="Gene3D" id="3.30.160.20">
    <property type="match status" value="1"/>
</dbReference>
<dbReference type="Gene3D" id="3.30.230.10">
    <property type="match status" value="1"/>
</dbReference>
<dbReference type="HAMAP" id="MF_01307_B">
    <property type="entry name" value="Ribosomal_uS5_B"/>
    <property type="match status" value="1"/>
</dbReference>
<dbReference type="InterPro" id="IPR020568">
    <property type="entry name" value="Ribosomal_Su5_D2-typ_SF"/>
</dbReference>
<dbReference type="InterPro" id="IPR000851">
    <property type="entry name" value="Ribosomal_uS5"/>
</dbReference>
<dbReference type="InterPro" id="IPR005712">
    <property type="entry name" value="Ribosomal_uS5_bac-type"/>
</dbReference>
<dbReference type="InterPro" id="IPR005324">
    <property type="entry name" value="Ribosomal_uS5_C"/>
</dbReference>
<dbReference type="InterPro" id="IPR013810">
    <property type="entry name" value="Ribosomal_uS5_N"/>
</dbReference>
<dbReference type="InterPro" id="IPR018192">
    <property type="entry name" value="Ribosomal_uS5_N_CS"/>
</dbReference>
<dbReference type="InterPro" id="IPR014721">
    <property type="entry name" value="Ribsml_uS5_D2-typ_fold_subgr"/>
</dbReference>
<dbReference type="NCBIfam" id="TIGR01021">
    <property type="entry name" value="rpsE_bact"/>
    <property type="match status" value="1"/>
</dbReference>
<dbReference type="PANTHER" id="PTHR48277">
    <property type="entry name" value="MITOCHONDRIAL RIBOSOMAL PROTEIN S5"/>
    <property type="match status" value="1"/>
</dbReference>
<dbReference type="PANTHER" id="PTHR48277:SF1">
    <property type="entry name" value="MITOCHONDRIAL RIBOSOMAL PROTEIN S5"/>
    <property type="match status" value="1"/>
</dbReference>
<dbReference type="Pfam" id="PF00333">
    <property type="entry name" value="Ribosomal_S5"/>
    <property type="match status" value="1"/>
</dbReference>
<dbReference type="Pfam" id="PF03719">
    <property type="entry name" value="Ribosomal_S5_C"/>
    <property type="match status" value="1"/>
</dbReference>
<dbReference type="SUPFAM" id="SSF54768">
    <property type="entry name" value="dsRNA-binding domain-like"/>
    <property type="match status" value="1"/>
</dbReference>
<dbReference type="SUPFAM" id="SSF54211">
    <property type="entry name" value="Ribosomal protein S5 domain 2-like"/>
    <property type="match status" value="1"/>
</dbReference>
<dbReference type="PROSITE" id="PS00585">
    <property type="entry name" value="RIBOSOMAL_S5"/>
    <property type="match status" value="1"/>
</dbReference>
<dbReference type="PROSITE" id="PS50881">
    <property type="entry name" value="S5_DSRBD"/>
    <property type="match status" value="1"/>
</dbReference>
<organism>
    <name type="scientific">Bradyrhizobium sp. (strain ORS 278)</name>
    <dbReference type="NCBI Taxonomy" id="114615"/>
    <lineage>
        <taxon>Bacteria</taxon>
        <taxon>Pseudomonadati</taxon>
        <taxon>Pseudomonadota</taxon>
        <taxon>Alphaproteobacteria</taxon>
        <taxon>Hyphomicrobiales</taxon>
        <taxon>Nitrobacteraceae</taxon>
        <taxon>Bradyrhizobium</taxon>
    </lineage>
</organism>
<name>RS5_BRASO</name>
<gene>
    <name evidence="1" type="primary">rpsE</name>
    <name type="ordered locus">BRADO3083</name>
</gene>
<protein>
    <recommendedName>
        <fullName evidence="1">Small ribosomal subunit protein uS5</fullName>
    </recommendedName>
    <alternativeName>
        <fullName evidence="2">30S ribosomal protein S5</fullName>
    </alternativeName>
</protein>